<feature type="chain" id="PRO_0000167209" description="Small ribosomal subunit protein bS16">
    <location>
        <begin position="1"/>
        <end position="171"/>
    </location>
</feature>
<feature type="region of interest" description="Disordered" evidence="2">
    <location>
        <begin position="114"/>
        <end position="171"/>
    </location>
</feature>
<feature type="compositionally biased region" description="Low complexity" evidence="2">
    <location>
        <begin position="142"/>
        <end position="171"/>
    </location>
</feature>
<organism>
    <name type="scientific">Mycolicibacterium paratuberculosis (strain ATCC BAA-968 / K-10)</name>
    <name type="common">Mycobacterium paratuberculosis</name>
    <dbReference type="NCBI Taxonomy" id="262316"/>
    <lineage>
        <taxon>Bacteria</taxon>
        <taxon>Bacillati</taxon>
        <taxon>Actinomycetota</taxon>
        <taxon>Actinomycetes</taxon>
        <taxon>Mycobacteriales</taxon>
        <taxon>Mycobacteriaceae</taxon>
        <taxon>Mycobacterium</taxon>
        <taxon>Mycobacterium avium complex (MAC)</taxon>
    </lineage>
</organism>
<reference key="1">
    <citation type="journal article" date="2005" name="Proc. Natl. Acad. Sci. U.S.A.">
        <title>The complete genome sequence of Mycobacterium avium subspecies paratuberculosis.</title>
        <authorList>
            <person name="Li L."/>
            <person name="Bannantine J.P."/>
            <person name="Zhang Q."/>
            <person name="Amonsin A."/>
            <person name="May B.J."/>
            <person name="Alt D."/>
            <person name="Banerji N."/>
            <person name="Kanjilal S."/>
            <person name="Kapur V."/>
        </authorList>
    </citation>
    <scope>NUCLEOTIDE SEQUENCE [LARGE SCALE GENOMIC DNA]</scope>
    <source>
        <strain>ATCC BAA-968 / K-10</strain>
    </source>
</reference>
<dbReference type="EMBL" id="AE016958">
    <property type="protein sequence ID" value="AAS05294.1"/>
    <property type="molecule type" value="Genomic_DNA"/>
</dbReference>
<dbReference type="RefSeq" id="WP_003875069.1">
    <property type="nucleotide sequence ID" value="NZ_CP106873.1"/>
</dbReference>
<dbReference type="SMR" id="P62234"/>
<dbReference type="STRING" id="262316.MAP_2977c"/>
<dbReference type="KEGG" id="mpa:MAP_2977c"/>
<dbReference type="eggNOG" id="COG0228">
    <property type="taxonomic scope" value="Bacteria"/>
</dbReference>
<dbReference type="HOGENOM" id="CLU_100590_1_1_11"/>
<dbReference type="Proteomes" id="UP000000580">
    <property type="component" value="Chromosome"/>
</dbReference>
<dbReference type="GO" id="GO:0005737">
    <property type="term" value="C:cytoplasm"/>
    <property type="evidence" value="ECO:0007669"/>
    <property type="project" value="UniProtKB-ARBA"/>
</dbReference>
<dbReference type="GO" id="GO:0015935">
    <property type="term" value="C:small ribosomal subunit"/>
    <property type="evidence" value="ECO:0007669"/>
    <property type="project" value="TreeGrafter"/>
</dbReference>
<dbReference type="GO" id="GO:0003735">
    <property type="term" value="F:structural constituent of ribosome"/>
    <property type="evidence" value="ECO:0007669"/>
    <property type="project" value="InterPro"/>
</dbReference>
<dbReference type="GO" id="GO:0006412">
    <property type="term" value="P:translation"/>
    <property type="evidence" value="ECO:0007669"/>
    <property type="project" value="UniProtKB-UniRule"/>
</dbReference>
<dbReference type="Gene3D" id="3.30.1320.10">
    <property type="match status" value="1"/>
</dbReference>
<dbReference type="HAMAP" id="MF_00385">
    <property type="entry name" value="Ribosomal_bS16"/>
    <property type="match status" value="1"/>
</dbReference>
<dbReference type="InterPro" id="IPR000307">
    <property type="entry name" value="Ribosomal_bS16"/>
</dbReference>
<dbReference type="InterPro" id="IPR020592">
    <property type="entry name" value="Ribosomal_bS16_CS"/>
</dbReference>
<dbReference type="InterPro" id="IPR023803">
    <property type="entry name" value="Ribosomal_bS16_dom_sf"/>
</dbReference>
<dbReference type="NCBIfam" id="NF011093">
    <property type="entry name" value="PRK14520.1"/>
    <property type="match status" value="1"/>
</dbReference>
<dbReference type="NCBIfam" id="TIGR00002">
    <property type="entry name" value="S16"/>
    <property type="match status" value="1"/>
</dbReference>
<dbReference type="PANTHER" id="PTHR12919">
    <property type="entry name" value="30S RIBOSOMAL PROTEIN S16"/>
    <property type="match status" value="1"/>
</dbReference>
<dbReference type="PANTHER" id="PTHR12919:SF20">
    <property type="entry name" value="SMALL RIBOSOMAL SUBUNIT PROTEIN BS16M"/>
    <property type="match status" value="1"/>
</dbReference>
<dbReference type="Pfam" id="PF00886">
    <property type="entry name" value="Ribosomal_S16"/>
    <property type="match status" value="1"/>
</dbReference>
<dbReference type="SUPFAM" id="SSF54565">
    <property type="entry name" value="Ribosomal protein S16"/>
    <property type="match status" value="1"/>
</dbReference>
<dbReference type="PROSITE" id="PS00732">
    <property type="entry name" value="RIBOSOMAL_S16"/>
    <property type="match status" value="1"/>
</dbReference>
<name>RS16_MYCPA</name>
<keyword id="KW-1185">Reference proteome</keyword>
<keyword id="KW-0687">Ribonucleoprotein</keyword>
<keyword id="KW-0689">Ribosomal protein</keyword>
<comment type="similarity">
    <text evidence="1">Belongs to the bacterial ribosomal protein bS16 family.</text>
</comment>
<evidence type="ECO:0000255" key="1">
    <source>
        <dbReference type="HAMAP-Rule" id="MF_00385"/>
    </source>
</evidence>
<evidence type="ECO:0000256" key="2">
    <source>
        <dbReference type="SAM" id="MobiDB-lite"/>
    </source>
</evidence>
<evidence type="ECO:0000305" key="3"/>
<proteinExistence type="inferred from homology"/>
<sequence>MAVKIKLTRLGKIRNPQYRIAVADARTRRDGRSIEIIGRYHPKEDPSLIEINSERAQYWLSVGAQPTEPVLKLLKITGDWQKFKGLPGAEGRLKVAPPKPSKLELFNAALAEAEGGPTTEAAKPKKKAATSGAKKAAKAAEPEAAASEAAEPEAAAAPAEGGEQAESSAES</sequence>
<protein>
    <recommendedName>
        <fullName evidence="1">Small ribosomal subunit protein bS16</fullName>
    </recommendedName>
    <alternativeName>
        <fullName evidence="3">30S ribosomal protein S16</fullName>
    </alternativeName>
</protein>
<gene>
    <name evidence="1" type="primary">rpsP</name>
    <name type="ordered locus">MAP_2977c</name>
</gene>
<accession>P62234</accession>